<organism>
    <name type="scientific">Aeromonas hydrophila</name>
    <dbReference type="NCBI Taxonomy" id="644"/>
    <lineage>
        <taxon>Bacteria</taxon>
        <taxon>Pseudomonadati</taxon>
        <taxon>Pseudomonadota</taxon>
        <taxon>Gammaproteobacteria</taxon>
        <taxon>Aeromonadales</taxon>
        <taxon>Aeromonadaceae</taxon>
        <taxon>Aeromonas</taxon>
    </lineage>
</organism>
<evidence type="ECO:0000256" key="1">
    <source>
        <dbReference type="SAM" id="MobiDB-lite"/>
    </source>
</evidence>
<evidence type="ECO:0000269" key="2">
    <source>
    </source>
</evidence>
<evidence type="ECO:0000305" key="3"/>
<evidence type="ECO:0000312" key="4">
    <source>
        <dbReference type="EMBL" id="ABG57133.1"/>
    </source>
</evidence>
<proteinExistence type="inferred from homology"/>
<protein>
    <recommendedName>
        <fullName>Type VI secretion system spike protein VgrG2</fullName>
    </recommendedName>
</protein>
<name>VGRG2_AERHY</name>
<sequence>MADSTGLQFTVKVGALPENTFVVAEFALDEALNRPFNLRLELASAQPDIDFGAVLDQPCELLVWYNGELQRRVCGVVSDFAQGDSGFRRTRYQLMVQPALWRLSLRQNSRIFQAQKPDEILSILLQEHGITDYAFALKNEHAKREYCVQYRETGLDFVNRLAAEEGMFYFHEFEVGKHRIVFADDSAALTAGPELFFNLGNRSLEQGPYVRQFHYREAVRPSDVELKDYSFKTPAYGLSHKKVGAELTHQRDTYQHFDFPGRYKEDPSGKAFAQHRLDALRNDAVAGSGKSNSSALQPGQTFSLTEHPNDSLNTDWQIVRIQHTGLQSQALEEEGGSGPTVYHNEFGVVKASTTWRARIGSPEAPHKPMVDGPQIAVVVGPEGEEIYCDEHGRVKLQFPWDRYGSSNDQSSCWVRVSQGWAGGQYGMMAIPRIGHEVIVSFLEGDPDQPIVTGRTYHATNRPPYELPANKTRTVLRTETHQGEGFNELRFEDQAGKEEIYIHGQKDLNVLIENDAAWHIKHDQHTDIDNERVTRIKANDHLTVEGEKRDQIKADYSLTVDASLHQKLGQSLLVEAGSEVHHKAGMKIVMEAGAELTLKVGGSFVKIDPSGVTLSGGSIKMNSGGSPGSGSGWAGQMPIQPGAVEVVAPPPPMDPARQIATLKSAEPVCEICEQLARQEGGG</sequence>
<comment type="function">
    <text evidence="2">Part of the type VI secretion system specialized secretion system, which delivers several virulence factors in both prokaryotic and eukaryotic cells during infection. Plays an essential role in bacterial mobility and biofilm formation.</text>
</comment>
<comment type="disruption phenotype">
    <text evidence="2">Deletion positively influences motility while it has a negative effect on biofilm formation.</text>
</comment>
<comment type="similarity">
    <text evidence="3">Belongs to the VgrG protein family.</text>
</comment>
<reference key="1">
    <citation type="journal article" date="2008" name="Microb. Pathog.">
        <title>Molecular characterization of a functional type VI secretion system from a clinical isolate of Aeromonas hydrophila.</title>
        <authorList>
            <person name="Suarez G."/>
            <person name="Sierra J.C."/>
            <person name="Sha J."/>
            <person name="Wang S."/>
            <person name="Erova T.E."/>
            <person name="Fadl A.A."/>
            <person name="Foltz S.M."/>
            <person name="Horneman A.J."/>
            <person name="Chopra A.K."/>
        </authorList>
    </citation>
    <scope>NUCLEOTIDE SEQUENCE [GENOMIC DNA]</scope>
    <source>
        <strain>SSU</strain>
    </source>
</reference>
<reference key="2">
    <citation type="journal article" date="2013" name="Microbiology">
        <title>Evaluation of the roles played by Hcp and VgrG type 6 secretion system effectors in Aeromonas hydrophila SSU pathogenesis.</title>
        <authorList>
            <person name="Sha J."/>
            <person name="Rosenzweig J.A."/>
            <person name="Kozlova E.V."/>
            <person name="Wang S."/>
            <person name="Erova T.E."/>
            <person name="Kirtley M.L."/>
            <person name="van Lier C.J."/>
            <person name="Chopra A.K."/>
        </authorList>
    </citation>
    <scope>FUNCTION</scope>
    <scope>DISRUPTION PHENOTYPE</scope>
    <source>
        <strain>SSU</strain>
    </source>
</reference>
<accession>Q0PZH5</accession>
<feature type="chain" id="PRO_0000448970" description="Type VI secretion system spike protein VgrG2">
    <location>
        <begin position="1"/>
        <end position="681"/>
    </location>
</feature>
<feature type="region of interest" description="Disordered" evidence="1">
    <location>
        <begin position="284"/>
        <end position="309"/>
    </location>
</feature>
<feature type="compositionally biased region" description="Polar residues" evidence="1">
    <location>
        <begin position="289"/>
        <end position="309"/>
    </location>
</feature>
<gene>
    <name evidence="4" type="primary">vgrG2</name>
</gene>
<dbReference type="EMBL" id="DQ667172">
    <property type="protein sequence ID" value="ABG57133.1"/>
    <property type="molecule type" value="Genomic_DNA"/>
</dbReference>
<dbReference type="SMR" id="Q0PZH5"/>
<dbReference type="Gene3D" id="2.30.110.50">
    <property type="match status" value="1"/>
</dbReference>
<dbReference type="Gene3D" id="4.10.220.110">
    <property type="match status" value="1"/>
</dbReference>
<dbReference type="Gene3D" id="3.55.50.10">
    <property type="entry name" value="Baseplate protein-like domains"/>
    <property type="match status" value="1"/>
</dbReference>
<dbReference type="Gene3D" id="2.40.50.230">
    <property type="entry name" value="Gp5 N-terminal domain"/>
    <property type="match status" value="1"/>
</dbReference>
<dbReference type="InterPro" id="IPR006531">
    <property type="entry name" value="Gp5/Vgr_OB"/>
</dbReference>
<dbReference type="InterPro" id="IPR054030">
    <property type="entry name" value="Gp5_Vgr_C"/>
</dbReference>
<dbReference type="InterPro" id="IPR017847">
    <property type="entry name" value="T6SS_RhsGE_Vgr_subset"/>
</dbReference>
<dbReference type="InterPro" id="IPR006533">
    <property type="entry name" value="T6SS_Vgr_RhsGE"/>
</dbReference>
<dbReference type="InterPro" id="IPR050708">
    <property type="entry name" value="T6SS_VgrG/RHS"/>
</dbReference>
<dbReference type="InterPro" id="IPR037026">
    <property type="entry name" value="Vgr_OB-fold_dom_sf"/>
</dbReference>
<dbReference type="NCBIfam" id="TIGR01646">
    <property type="entry name" value="vgr_GE"/>
    <property type="match status" value="1"/>
</dbReference>
<dbReference type="NCBIfam" id="TIGR03361">
    <property type="entry name" value="VI_Rhs_Vgr"/>
    <property type="match status" value="1"/>
</dbReference>
<dbReference type="PANTHER" id="PTHR32305">
    <property type="match status" value="1"/>
</dbReference>
<dbReference type="PANTHER" id="PTHR32305:SF11">
    <property type="entry name" value="TYPE VI SECRETION SYSTEM SPIKE PROTEIN VGRG3"/>
    <property type="match status" value="1"/>
</dbReference>
<dbReference type="Pfam" id="PF22178">
    <property type="entry name" value="Gp5_trimer_C"/>
    <property type="match status" value="1"/>
</dbReference>
<dbReference type="Pfam" id="PF04717">
    <property type="entry name" value="Phage_base_V"/>
    <property type="match status" value="1"/>
</dbReference>
<dbReference type="Pfam" id="PF05954">
    <property type="entry name" value="Phage_GPD"/>
    <property type="match status" value="1"/>
</dbReference>
<dbReference type="SUPFAM" id="SSF69255">
    <property type="entry name" value="gp5 N-terminal domain-like"/>
    <property type="match status" value="1"/>
</dbReference>
<dbReference type="SUPFAM" id="SSF69349">
    <property type="entry name" value="Phage fibre proteins"/>
    <property type="match status" value="1"/>
</dbReference>
<dbReference type="SUPFAM" id="SSF69279">
    <property type="entry name" value="Phage tail proteins"/>
    <property type="match status" value="2"/>
</dbReference>